<protein>
    <recommendedName>
        <fullName evidence="1">mRNA cleavage and polyadenylation factor clp1</fullName>
    </recommendedName>
</protein>
<evidence type="ECO:0000255" key="1">
    <source>
        <dbReference type="HAMAP-Rule" id="MF_03035"/>
    </source>
</evidence>
<evidence type="ECO:0000256" key="2">
    <source>
        <dbReference type="SAM" id="MobiDB-lite"/>
    </source>
</evidence>
<evidence type="ECO:0000305" key="3"/>
<dbReference type="EMBL" id="DS499597">
    <property type="protein sequence ID" value="EDP51877.1"/>
    <property type="molecule type" value="Genomic_DNA"/>
</dbReference>
<dbReference type="SMR" id="B0Y0Y6"/>
<dbReference type="EnsemblFungi" id="EDP51877">
    <property type="protein sequence ID" value="EDP51877"/>
    <property type="gene ID" value="AFUB_058970"/>
</dbReference>
<dbReference type="HOGENOM" id="CLU_018195_3_1_1"/>
<dbReference type="OrthoDB" id="107762at5052"/>
<dbReference type="PhylomeDB" id="B0Y0Y6"/>
<dbReference type="Proteomes" id="UP000001699">
    <property type="component" value="Unassembled WGS sequence"/>
</dbReference>
<dbReference type="GO" id="GO:0005849">
    <property type="term" value="C:mRNA cleavage factor complex"/>
    <property type="evidence" value="ECO:0007669"/>
    <property type="project" value="UniProtKB-UniRule"/>
</dbReference>
<dbReference type="GO" id="GO:0005524">
    <property type="term" value="F:ATP binding"/>
    <property type="evidence" value="ECO:0007669"/>
    <property type="project" value="UniProtKB-UniRule"/>
</dbReference>
<dbReference type="GO" id="GO:0051731">
    <property type="term" value="F:polynucleotide 5'-hydroxyl-kinase activity"/>
    <property type="evidence" value="ECO:0007669"/>
    <property type="project" value="InterPro"/>
</dbReference>
<dbReference type="GO" id="GO:0031124">
    <property type="term" value="P:mRNA 3'-end processing"/>
    <property type="evidence" value="ECO:0007669"/>
    <property type="project" value="UniProtKB-UniRule"/>
</dbReference>
<dbReference type="GO" id="GO:0006388">
    <property type="term" value="P:tRNA splicing, via endonucleolytic cleavage and ligation"/>
    <property type="evidence" value="ECO:0007669"/>
    <property type="project" value="TreeGrafter"/>
</dbReference>
<dbReference type="FunFam" id="3.40.50.300:FF:002095">
    <property type="entry name" value="mRNA cleavage and polyadenylation factor clp1"/>
    <property type="match status" value="1"/>
</dbReference>
<dbReference type="FunFam" id="2.60.120.1030:FF:000001">
    <property type="entry name" value="Protein CLP1 homolog 5"/>
    <property type="match status" value="1"/>
</dbReference>
<dbReference type="Gene3D" id="2.60.120.1030">
    <property type="entry name" value="Clp1, DNA binding domain"/>
    <property type="match status" value="1"/>
</dbReference>
<dbReference type="Gene3D" id="3.40.50.300">
    <property type="entry name" value="P-loop containing nucleotide triphosphate hydrolases"/>
    <property type="match status" value="1"/>
</dbReference>
<dbReference type="Gene3D" id="2.40.30.330">
    <property type="entry name" value="Pre-mRNA cleavage complex subunit Clp1, C-terminal domain"/>
    <property type="match status" value="1"/>
</dbReference>
<dbReference type="HAMAP" id="MF_03035">
    <property type="entry name" value="Clp1"/>
    <property type="match status" value="1"/>
</dbReference>
<dbReference type="InterPro" id="IPR028606">
    <property type="entry name" value="Clp1"/>
</dbReference>
<dbReference type="InterPro" id="IPR045116">
    <property type="entry name" value="Clp1/Grc3"/>
</dbReference>
<dbReference type="InterPro" id="IPR010655">
    <property type="entry name" value="Clp1_C"/>
</dbReference>
<dbReference type="InterPro" id="IPR038238">
    <property type="entry name" value="Clp1_C_sf"/>
</dbReference>
<dbReference type="InterPro" id="IPR032324">
    <property type="entry name" value="Clp1_N"/>
</dbReference>
<dbReference type="InterPro" id="IPR038239">
    <property type="entry name" value="Clp1_N_sf"/>
</dbReference>
<dbReference type="InterPro" id="IPR032319">
    <property type="entry name" value="CLP1_P"/>
</dbReference>
<dbReference type="InterPro" id="IPR027417">
    <property type="entry name" value="P-loop_NTPase"/>
</dbReference>
<dbReference type="PANTHER" id="PTHR12755">
    <property type="entry name" value="CLEAVAGE/POLYADENYLATION FACTOR IA SUBUNIT CLP1P"/>
    <property type="match status" value="1"/>
</dbReference>
<dbReference type="PANTHER" id="PTHR12755:SF6">
    <property type="entry name" value="POLYRIBONUCLEOTIDE 5'-HYDROXYL-KINASE CLP1"/>
    <property type="match status" value="1"/>
</dbReference>
<dbReference type="Pfam" id="PF06807">
    <property type="entry name" value="Clp1"/>
    <property type="match status" value="1"/>
</dbReference>
<dbReference type="Pfam" id="PF16573">
    <property type="entry name" value="CLP1_N"/>
    <property type="match status" value="1"/>
</dbReference>
<dbReference type="Pfam" id="PF16575">
    <property type="entry name" value="CLP1_P"/>
    <property type="match status" value="1"/>
</dbReference>
<dbReference type="SUPFAM" id="SSF52540">
    <property type="entry name" value="P-loop containing nucleoside triphosphate hydrolases"/>
    <property type="match status" value="1"/>
</dbReference>
<accession>B0Y0Y6</accession>
<comment type="function">
    <text evidence="1">Required for endonucleolytic cleavage during polyadenylation-dependent pre-mRNA 3'-end formation.</text>
</comment>
<comment type="subunit">
    <text evidence="1">Component of a pre-mRNA cleavage factor complex. Interacts directly with PCF11.</text>
</comment>
<comment type="subcellular location">
    <subcellularLocation>
        <location evidence="1">Nucleus</location>
    </subcellularLocation>
</comment>
<comment type="similarity">
    <text evidence="1">Belongs to the Clp1 family. Clp1 subfamily.</text>
</comment>
<comment type="caution">
    <text evidence="3">May lack the polyribonucleotide 5'-hydroxyl-kinase and polynucleotide 5'-hydroxyl-kinase activities that are characteristic of the human ortholog.</text>
</comment>
<reference key="1">
    <citation type="journal article" date="2008" name="PLoS Genet.">
        <title>Genomic islands in the pathogenic filamentous fungus Aspergillus fumigatus.</title>
        <authorList>
            <person name="Fedorova N.D."/>
            <person name="Khaldi N."/>
            <person name="Joardar V.S."/>
            <person name="Maiti R."/>
            <person name="Amedeo P."/>
            <person name="Anderson M.J."/>
            <person name="Crabtree J."/>
            <person name="Silva J.C."/>
            <person name="Badger J.H."/>
            <person name="Albarraq A."/>
            <person name="Angiuoli S."/>
            <person name="Bussey H."/>
            <person name="Bowyer P."/>
            <person name="Cotty P.J."/>
            <person name="Dyer P.S."/>
            <person name="Egan A."/>
            <person name="Galens K."/>
            <person name="Fraser-Liggett C.M."/>
            <person name="Haas B.J."/>
            <person name="Inman J.M."/>
            <person name="Kent R."/>
            <person name="Lemieux S."/>
            <person name="Malavazi I."/>
            <person name="Orvis J."/>
            <person name="Roemer T."/>
            <person name="Ronning C.M."/>
            <person name="Sundaram J.P."/>
            <person name="Sutton G."/>
            <person name="Turner G."/>
            <person name="Venter J.C."/>
            <person name="White O.R."/>
            <person name="Whitty B.R."/>
            <person name="Youngman P."/>
            <person name="Wolfe K.H."/>
            <person name="Goldman G.H."/>
            <person name="Wortman J.R."/>
            <person name="Jiang B."/>
            <person name="Denning D.W."/>
            <person name="Nierman W.C."/>
        </authorList>
    </citation>
    <scope>NUCLEOTIDE SEQUENCE [LARGE SCALE GENOMIC DNA]</scope>
    <source>
        <strain>CBS 144.89 / FGSC A1163 / CEA10</strain>
    </source>
</reference>
<name>CLP1_ASPFC</name>
<proteinExistence type="inferred from homology"/>
<gene>
    <name type="primary">clp1</name>
    <name type="ORF">AFUB_058970</name>
</gene>
<feature type="chain" id="PRO_0000375193" description="mRNA cleavage and polyadenylation factor clp1">
    <location>
        <begin position="1"/>
        <end position="552"/>
    </location>
</feature>
<feature type="region of interest" description="Disordered" evidence="2">
    <location>
        <begin position="409"/>
        <end position="470"/>
    </location>
</feature>
<feature type="compositionally biased region" description="Basic and acidic residues" evidence="2">
    <location>
        <begin position="432"/>
        <end position="444"/>
    </location>
</feature>
<feature type="compositionally biased region" description="Low complexity" evidence="2">
    <location>
        <begin position="459"/>
        <end position="468"/>
    </location>
</feature>
<feature type="binding site" evidence="1">
    <location>
        <position position="32"/>
    </location>
    <ligand>
        <name>ATP</name>
        <dbReference type="ChEBI" id="CHEBI:30616"/>
    </ligand>
</feature>
<feature type="binding site" evidence="1">
    <location>
        <position position="71"/>
    </location>
    <ligand>
        <name>ATP</name>
        <dbReference type="ChEBI" id="CHEBI:30616"/>
    </ligand>
</feature>
<feature type="binding site" evidence="1">
    <location>
        <begin position="159"/>
        <end position="164"/>
    </location>
    <ligand>
        <name>ATP</name>
        <dbReference type="ChEBI" id="CHEBI:30616"/>
    </ligand>
</feature>
<organism>
    <name type="scientific">Aspergillus fumigatus (strain CBS 144.89 / FGSC A1163 / CEA10)</name>
    <name type="common">Neosartorya fumigata</name>
    <dbReference type="NCBI Taxonomy" id="451804"/>
    <lineage>
        <taxon>Eukaryota</taxon>
        <taxon>Fungi</taxon>
        <taxon>Dikarya</taxon>
        <taxon>Ascomycota</taxon>
        <taxon>Pezizomycotina</taxon>
        <taxon>Eurotiomycetes</taxon>
        <taxon>Eurotiomycetidae</taxon>
        <taxon>Eurotiales</taxon>
        <taxon>Aspergillaceae</taxon>
        <taxon>Aspergillus</taxon>
        <taxon>Aspergillus subgen. Fumigati</taxon>
    </lineage>
</organism>
<sequence length="552" mass="57969">MSLPGLELSQTSSEREFVPAPPTQITLSKGSEWRFEVAFGTAIRVKLLAGTAELFGTELAASQTYTFSGTKAAIYTWHGCTLEVSAGDTISTIDGLGSGGLNGEGARGYGAGGCQSEYTAEETPMVEYANVHFALEAMRQEAKATGKDGPRVLILGPENAGKTSVAKILTAYATKVGRQPIVVNLDPAEGMLSVPGTLTATAFRTMMNVEEGWGSSPMSGPSAVPVKLPLVYFYPLQNPLEAEGAVYRPIVSRLALSVTGRMAEDEDTRETGIIVDTPGILSAGKPGSLEIINHIVTEFASSERLYSTMMKNYDNKPTSSASAAASDERITVVKLSKSGGCVDRDAAFMKSVRESQIRTYFFGNPIPSTASAALSMSASSTTNITLSPHAQQLDFDSLAVYNYTIASSDEDEDEYDPSQFGASDTFLPGGRNDAEGPETKHAEETSFTSSVPGLGGPSGDDAASGSSAVPLKKVLPPAPNTLANSLLAVTHTAPNASPAEIRDASIMGFLYVADVDSEKGKIRVLAPIGGRVPPRAIVWGKKWPGEVVGLVG</sequence>
<keyword id="KW-0067">ATP-binding</keyword>
<keyword id="KW-0507">mRNA processing</keyword>
<keyword id="KW-0547">Nucleotide-binding</keyword>
<keyword id="KW-0539">Nucleus</keyword>